<name>GPDA_BACAH</name>
<comment type="function">
    <text evidence="1">Catalyzes the reduction of the glycolytic intermediate dihydroxyacetone phosphate (DHAP) to sn-glycerol 3-phosphate (G3P), the key precursor for phospholipid synthesis.</text>
</comment>
<comment type="catalytic activity">
    <reaction evidence="1">
        <text>sn-glycerol 3-phosphate + NAD(+) = dihydroxyacetone phosphate + NADH + H(+)</text>
        <dbReference type="Rhea" id="RHEA:11092"/>
        <dbReference type="ChEBI" id="CHEBI:15378"/>
        <dbReference type="ChEBI" id="CHEBI:57540"/>
        <dbReference type="ChEBI" id="CHEBI:57597"/>
        <dbReference type="ChEBI" id="CHEBI:57642"/>
        <dbReference type="ChEBI" id="CHEBI:57945"/>
        <dbReference type="EC" id="1.1.1.94"/>
    </reaction>
    <physiologicalReaction direction="right-to-left" evidence="1">
        <dbReference type="Rhea" id="RHEA:11094"/>
    </physiologicalReaction>
</comment>
<comment type="catalytic activity">
    <reaction evidence="1">
        <text>sn-glycerol 3-phosphate + NADP(+) = dihydroxyacetone phosphate + NADPH + H(+)</text>
        <dbReference type="Rhea" id="RHEA:11096"/>
        <dbReference type="ChEBI" id="CHEBI:15378"/>
        <dbReference type="ChEBI" id="CHEBI:57597"/>
        <dbReference type="ChEBI" id="CHEBI:57642"/>
        <dbReference type="ChEBI" id="CHEBI:57783"/>
        <dbReference type="ChEBI" id="CHEBI:58349"/>
        <dbReference type="EC" id="1.1.1.94"/>
    </reaction>
    <physiologicalReaction direction="right-to-left" evidence="1">
        <dbReference type="Rhea" id="RHEA:11098"/>
    </physiologicalReaction>
</comment>
<comment type="pathway">
    <text evidence="1">Membrane lipid metabolism; glycerophospholipid metabolism.</text>
</comment>
<comment type="subcellular location">
    <subcellularLocation>
        <location evidence="1">Cytoplasm</location>
    </subcellularLocation>
</comment>
<comment type="similarity">
    <text evidence="1">Belongs to the NAD-dependent glycerol-3-phosphate dehydrogenase family.</text>
</comment>
<dbReference type="EC" id="1.1.1.94" evidence="1"/>
<dbReference type="EMBL" id="CP000485">
    <property type="protein sequence ID" value="ABK84703.1"/>
    <property type="molecule type" value="Genomic_DNA"/>
</dbReference>
<dbReference type="RefSeq" id="WP_000161776.1">
    <property type="nucleotide sequence ID" value="NC_008600.1"/>
</dbReference>
<dbReference type="SMR" id="A0RBW0"/>
<dbReference type="KEGG" id="btl:BALH_1360"/>
<dbReference type="HOGENOM" id="CLU_033449_0_2_9"/>
<dbReference type="UniPathway" id="UPA00940"/>
<dbReference type="GO" id="GO:0005829">
    <property type="term" value="C:cytosol"/>
    <property type="evidence" value="ECO:0007669"/>
    <property type="project" value="TreeGrafter"/>
</dbReference>
<dbReference type="GO" id="GO:0047952">
    <property type="term" value="F:glycerol-3-phosphate dehydrogenase [NAD(P)+] activity"/>
    <property type="evidence" value="ECO:0007669"/>
    <property type="project" value="UniProtKB-UniRule"/>
</dbReference>
<dbReference type="GO" id="GO:0051287">
    <property type="term" value="F:NAD binding"/>
    <property type="evidence" value="ECO:0007669"/>
    <property type="project" value="InterPro"/>
</dbReference>
<dbReference type="GO" id="GO:0005975">
    <property type="term" value="P:carbohydrate metabolic process"/>
    <property type="evidence" value="ECO:0007669"/>
    <property type="project" value="InterPro"/>
</dbReference>
<dbReference type="GO" id="GO:0046167">
    <property type="term" value="P:glycerol-3-phosphate biosynthetic process"/>
    <property type="evidence" value="ECO:0007669"/>
    <property type="project" value="UniProtKB-UniRule"/>
</dbReference>
<dbReference type="GO" id="GO:0046168">
    <property type="term" value="P:glycerol-3-phosphate catabolic process"/>
    <property type="evidence" value="ECO:0007669"/>
    <property type="project" value="InterPro"/>
</dbReference>
<dbReference type="GO" id="GO:0006650">
    <property type="term" value="P:glycerophospholipid metabolic process"/>
    <property type="evidence" value="ECO:0007669"/>
    <property type="project" value="UniProtKB-UniRule"/>
</dbReference>
<dbReference type="GO" id="GO:0008654">
    <property type="term" value="P:phospholipid biosynthetic process"/>
    <property type="evidence" value="ECO:0007669"/>
    <property type="project" value="UniProtKB-KW"/>
</dbReference>
<dbReference type="FunFam" id="1.10.1040.10:FF:000001">
    <property type="entry name" value="Glycerol-3-phosphate dehydrogenase [NAD(P)+]"/>
    <property type="match status" value="1"/>
</dbReference>
<dbReference type="FunFam" id="3.40.50.720:FF:000019">
    <property type="entry name" value="Glycerol-3-phosphate dehydrogenase [NAD(P)+]"/>
    <property type="match status" value="1"/>
</dbReference>
<dbReference type="Gene3D" id="1.10.1040.10">
    <property type="entry name" value="N-(1-d-carboxylethyl)-l-norvaline Dehydrogenase, domain 2"/>
    <property type="match status" value="1"/>
</dbReference>
<dbReference type="Gene3D" id="3.40.50.720">
    <property type="entry name" value="NAD(P)-binding Rossmann-like Domain"/>
    <property type="match status" value="1"/>
</dbReference>
<dbReference type="HAMAP" id="MF_00394">
    <property type="entry name" value="NAD_Glyc3P_dehydrog"/>
    <property type="match status" value="1"/>
</dbReference>
<dbReference type="InterPro" id="IPR008927">
    <property type="entry name" value="6-PGluconate_DH-like_C_sf"/>
</dbReference>
<dbReference type="InterPro" id="IPR013328">
    <property type="entry name" value="6PGD_dom2"/>
</dbReference>
<dbReference type="InterPro" id="IPR006168">
    <property type="entry name" value="G3P_DH_NAD-dep"/>
</dbReference>
<dbReference type="InterPro" id="IPR006109">
    <property type="entry name" value="G3P_DH_NAD-dep_C"/>
</dbReference>
<dbReference type="InterPro" id="IPR011128">
    <property type="entry name" value="G3P_DH_NAD-dep_N"/>
</dbReference>
<dbReference type="InterPro" id="IPR036291">
    <property type="entry name" value="NAD(P)-bd_dom_sf"/>
</dbReference>
<dbReference type="NCBIfam" id="NF000940">
    <property type="entry name" value="PRK00094.1-2"/>
    <property type="match status" value="1"/>
</dbReference>
<dbReference type="NCBIfam" id="NF000941">
    <property type="entry name" value="PRK00094.1-3"/>
    <property type="match status" value="1"/>
</dbReference>
<dbReference type="NCBIfam" id="NF000942">
    <property type="entry name" value="PRK00094.1-4"/>
    <property type="match status" value="1"/>
</dbReference>
<dbReference type="PANTHER" id="PTHR11728">
    <property type="entry name" value="GLYCEROL-3-PHOSPHATE DEHYDROGENASE"/>
    <property type="match status" value="1"/>
</dbReference>
<dbReference type="PANTHER" id="PTHR11728:SF1">
    <property type="entry name" value="GLYCEROL-3-PHOSPHATE DEHYDROGENASE [NAD(+)] 2, CHLOROPLASTIC"/>
    <property type="match status" value="1"/>
</dbReference>
<dbReference type="Pfam" id="PF07479">
    <property type="entry name" value="NAD_Gly3P_dh_C"/>
    <property type="match status" value="1"/>
</dbReference>
<dbReference type="Pfam" id="PF01210">
    <property type="entry name" value="NAD_Gly3P_dh_N"/>
    <property type="match status" value="1"/>
</dbReference>
<dbReference type="PIRSF" id="PIRSF000114">
    <property type="entry name" value="Glycerol-3-P_dh"/>
    <property type="match status" value="1"/>
</dbReference>
<dbReference type="PRINTS" id="PR00077">
    <property type="entry name" value="GPDHDRGNASE"/>
</dbReference>
<dbReference type="SUPFAM" id="SSF48179">
    <property type="entry name" value="6-phosphogluconate dehydrogenase C-terminal domain-like"/>
    <property type="match status" value="1"/>
</dbReference>
<dbReference type="SUPFAM" id="SSF51735">
    <property type="entry name" value="NAD(P)-binding Rossmann-fold domains"/>
    <property type="match status" value="1"/>
</dbReference>
<dbReference type="PROSITE" id="PS00957">
    <property type="entry name" value="NAD_G3PDH"/>
    <property type="match status" value="1"/>
</dbReference>
<protein>
    <recommendedName>
        <fullName evidence="1">Glycerol-3-phosphate dehydrogenase [NAD(P)+]</fullName>
        <ecNumber evidence="1">1.1.1.94</ecNumber>
    </recommendedName>
    <alternativeName>
        <fullName evidence="1">NAD(P)(+)-dependent glycerol-3-phosphate dehydrogenase</fullName>
    </alternativeName>
    <alternativeName>
        <fullName evidence="1">NAD(P)H-dependent dihydroxyacetone-phosphate reductase</fullName>
    </alternativeName>
</protein>
<evidence type="ECO:0000255" key="1">
    <source>
        <dbReference type="HAMAP-Rule" id="MF_00394"/>
    </source>
</evidence>
<feature type="chain" id="PRO_1000049482" description="Glycerol-3-phosphate dehydrogenase [NAD(P)+]">
    <location>
        <begin position="1"/>
        <end position="340"/>
    </location>
</feature>
<feature type="active site" description="Proton acceptor" evidence="1">
    <location>
        <position position="192"/>
    </location>
</feature>
<feature type="binding site" evidence="1">
    <location>
        <position position="11"/>
    </location>
    <ligand>
        <name>NADPH</name>
        <dbReference type="ChEBI" id="CHEBI:57783"/>
    </ligand>
</feature>
<feature type="binding site" evidence="1">
    <location>
        <position position="12"/>
    </location>
    <ligand>
        <name>NADPH</name>
        <dbReference type="ChEBI" id="CHEBI:57783"/>
    </ligand>
</feature>
<feature type="binding site" evidence="1">
    <location>
        <position position="33"/>
    </location>
    <ligand>
        <name>NADPH</name>
        <dbReference type="ChEBI" id="CHEBI:57783"/>
    </ligand>
</feature>
<feature type="binding site" evidence="1">
    <location>
        <position position="106"/>
    </location>
    <ligand>
        <name>NADPH</name>
        <dbReference type="ChEBI" id="CHEBI:57783"/>
    </ligand>
</feature>
<feature type="binding site" evidence="1">
    <location>
        <position position="106"/>
    </location>
    <ligand>
        <name>sn-glycerol 3-phosphate</name>
        <dbReference type="ChEBI" id="CHEBI:57597"/>
    </ligand>
</feature>
<feature type="binding site" evidence="1">
    <location>
        <position position="137"/>
    </location>
    <ligand>
        <name>sn-glycerol 3-phosphate</name>
        <dbReference type="ChEBI" id="CHEBI:57597"/>
    </ligand>
</feature>
<feature type="binding site" evidence="1">
    <location>
        <position position="139"/>
    </location>
    <ligand>
        <name>sn-glycerol 3-phosphate</name>
        <dbReference type="ChEBI" id="CHEBI:57597"/>
    </ligand>
</feature>
<feature type="binding site" evidence="1">
    <location>
        <position position="141"/>
    </location>
    <ligand>
        <name>NADPH</name>
        <dbReference type="ChEBI" id="CHEBI:57783"/>
    </ligand>
</feature>
<feature type="binding site" evidence="1">
    <location>
        <position position="192"/>
    </location>
    <ligand>
        <name>sn-glycerol 3-phosphate</name>
        <dbReference type="ChEBI" id="CHEBI:57597"/>
    </ligand>
</feature>
<feature type="binding site" evidence="1">
    <location>
        <position position="245"/>
    </location>
    <ligand>
        <name>sn-glycerol 3-phosphate</name>
        <dbReference type="ChEBI" id="CHEBI:57597"/>
    </ligand>
</feature>
<feature type="binding site" evidence="1">
    <location>
        <position position="255"/>
    </location>
    <ligand>
        <name>sn-glycerol 3-phosphate</name>
        <dbReference type="ChEBI" id="CHEBI:57597"/>
    </ligand>
</feature>
<feature type="binding site" evidence="1">
    <location>
        <position position="256"/>
    </location>
    <ligand>
        <name>NADPH</name>
        <dbReference type="ChEBI" id="CHEBI:57783"/>
    </ligand>
</feature>
<feature type="binding site" evidence="1">
    <location>
        <position position="256"/>
    </location>
    <ligand>
        <name>sn-glycerol 3-phosphate</name>
        <dbReference type="ChEBI" id="CHEBI:57597"/>
    </ligand>
</feature>
<feature type="binding site" evidence="1">
    <location>
        <position position="257"/>
    </location>
    <ligand>
        <name>sn-glycerol 3-phosphate</name>
        <dbReference type="ChEBI" id="CHEBI:57597"/>
    </ligand>
</feature>
<feature type="binding site" evidence="1">
    <location>
        <position position="280"/>
    </location>
    <ligand>
        <name>NADPH</name>
        <dbReference type="ChEBI" id="CHEBI:57783"/>
    </ligand>
</feature>
<feature type="binding site" evidence="1">
    <location>
        <position position="282"/>
    </location>
    <ligand>
        <name>NADPH</name>
        <dbReference type="ChEBI" id="CHEBI:57783"/>
    </ligand>
</feature>
<organism>
    <name type="scientific">Bacillus thuringiensis (strain Al Hakam)</name>
    <dbReference type="NCBI Taxonomy" id="412694"/>
    <lineage>
        <taxon>Bacteria</taxon>
        <taxon>Bacillati</taxon>
        <taxon>Bacillota</taxon>
        <taxon>Bacilli</taxon>
        <taxon>Bacillales</taxon>
        <taxon>Bacillaceae</taxon>
        <taxon>Bacillus</taxon>
        <taxon>Bacillus cereus group</taxon>
    </lineage>
</organism>
<reference key="1">
    <citation type="journal article" date="2007" name="J. Bacteriol.">
        <title>The complete genome sequence of Bacillus thuringiensis Al Hakam.</title>
        <authorList>
            <person name="Challacombe J.F."/>
            <person name="Altherr M.R."/>
            <person name="Xie G."/>
            <person name="Bhotika S.S."/>
            <person name="Brown N."/>
            <person name="Bruce D."/>
            <person name="Campbell C.S."/>
            <person name="Campbell M.L."/>
            <person name="Chen J."/>
            <person name="Chertkov O."/>
            <person name="Cleland C."/>
            <person name="Dimitrijevic M."/>
            <person name="Doggett N.A."/>
            <person name="Fawcett J.J."/>
            <person name="Glavina T."/>
            <person name="Goodwin L.A."/>
            <person name="Green L.D."/>
            <person name="Han C.S."/>
            <person name="Hill K.K."/>
            <person name="Hitchcock P."/>
            <person name="Jackson P.J."/>
            <person name="Keim P."/>
            <person name="Kewalramani A.R."/>
            <person name="Longmire J."/>
            <person name="Lucas S."/>
            <person name="Malfatti S."/>
            <person name="Martinez D."/>
            <person name="McMurry K."/>
            <person name="Meincke L.J."/>
            <person name="Misra M."/>
            <person name="Moseman B.L."/>
            <person name="Mundt M."/>
            <person name="Munk A.C."/>
            <person name="Okinaka R.T."/>
            <person name="Parson-Quintana B."/>
            <person name="Reilly L.P."/>
            <person name="Richardson P."/>
            <person name="Robinson D.L."/>
            <person name="Saunders E."/>
            <person name="Tapia R."/>
            <person name="Tesmer J.G."/>
            <person name="Thayer N."/>
            <person name="Thompson L.S."/>
            <person name="Tice H."/>
            <person name="Ticknor L.O."/>
            <person name="Wills P.L."/>
            <person name="Gilna P."/>
            <person name="Brettin T.S."/>
        </authorList>
    </citation>
    <scope>NUCLEOTIDE SEQUENCE [LARGE SCALE GENOMIC DNA]</scope>
    <source>
        <strain>Al Hakam</strain>
    </source>
</reference>
<gene>
    <name evidence="1" type="primary">gpsA</name>
    <name type="ordered locus">BALH_1360</name>
</gene>
<keyword id="KW-0963">Cytoplasm</keyword>
<keyword id="KW-0444">Lipid biosynthesis</keyword>
<keyword id="KW-0443">Lipid metabolism</keyword>
<keyword id="KW-0520">NAD</keyword>
<keyword id="KW-0521">NADP</keyword>
<keyword id="KW-0547">Nucleotide-binding</keyword>
<keyword id="KW-0560">Oxidoreductase</keyword>
<keyword id="KW-0594">Phospholipid biosynthesis</keyword>
<keyword id="KW-1208">Phospholipid metabolism</keyword>
<accession>A0RBW0</accession>
<proteinExistence type="inferred from homology"/>
<sequence>MTKITVVGAGSWGTALAMVLADNGHDVRIWGNRSELMDEINTKHENSRYLPGITLPSTIVAYSSLEEALVDVNVVLLVVPTKAYREVLQDMKKYVAGPTTWIHASKGIEPGTSKRISEVIEEEIPEDLIKDVVVLSGPSHAEEVGLRQATTVTSAAKRMEAAEEVQDLFMNSYFRVYTNPDIVGVELGGALKNIIALAAGITDGLGLGDNAKAALMTRGLTEIARLGRKMGGNPLTFAGLTGMGDLIVTCTSVHSRNWRAGNMLGKGHSLEEVLESMGMVVEGVRTTKAAHELAEKMEVEMPITAALYDVLFNGNNVKDAVGSLMGRVRKHEVEAIPDLL</sequence>